<feature type="chain" id="PRO_1000060617" description="Integration host factor subunit beta">
    <location>
        <begin position="1"/>
        <end position="101"/>
    </location>
</feature>
<name>IHFB_MARMM</name>
<proteinExistence type="inferred from homology"/>
<keyword id="KW-0233">DNA recombination</keyword>
<keyword id="KW-0238">DNA-binding</keyword>
<keyword id="KW-1185">Reference proteome</keyword>
<keyword id="KW-0804">Transcription</keyword>
<keyword id="KW-0805">Transcription regulation</keyword>
<keyword id="KW-0810">Translation regulation</keyword>
<dbReference type="EMBL" id="CP000449">
    <property type="protein sequence ID" value="ABI64393.1"/>
    <property type="molecule type" value="Genomic_DNA"/>
</dbReference>
<dbReference type="RefSeq" id="WP_011642040.1">
    <property type="nucleotide sequence ID" value="NC_008347.1"/>
</dbReference>
<dbReference type="SMR" id="Q0ATJ4"/>
<dbReference type="STRING" id="394221.Mmar10_0097"/>
<dbReference type="KEGG" id="mmr:Mmar10_0097"/>
<dbReference type="eggNOG" id="COG0776">
    <property type="taxonomic scope" value="Bacteria"/>
</dbReference>
<dbReference type="HOGENOM" id="CLU_105066_2_1_5"/>
<dbReference type="OrthoDB" id="9804203at2"/>
<dbReference type="Proteomes" id="UP000001964">
    <property type="component" value="Chromosome"/>
</dbReference>
<dbReference type="GO" id="GO:0005694">
    <property type="term" value="C:chromosome"/>
    <property type="evidence" value="ECO:0007669"/>
    <property type="project" value="InterPro"/>
</dbReference>
<dbReference type="GO" id="GO:0005829">
    <property type="term" value="C:cytosol"/>
    <property type="evidence" value="ECO:0007669"/>
    <property type="project" value="TreeGrafter"/>
</dbReference>
<dbReference type="GO" id="GO:0003677">
    <property type="term" value="F:DNA binding"/>
    <property type="evidence" value="ECO:0007669"/>
    <property type="project" value="UniProtKB-UniRule"/>
</dbReference>
<dbReference type="GO" id="GO:0030527">
    <property type="term" value="F:structural constituent of chromatin"/>
    <property type="evidence" value="ECO:0007669"/>
    <property type="project" value="InterPro"/>
</dbReference>
<dbReference type="GO" id="GO:0006310">
    <property type="term" value="P:DNA recombination"/>
    <property type="evidence" value="ECO:0007669"/>
    <property type="project" value="UniProtKB-UniRule"/>
</dbReference>
<dbReference type="GO" id="GO:0006355">
    <property type="term" value="P:regulation of DNA-templated transcription"/>
    <property type="evidence" value="ECO:0007669"/>
    <property type="project" value="UniProtKB-UniRule"/>
</dbReference>
<dbReference type="GO" id="GO:0006417">
    <property type="term" value="P:regulation of translation"/>
    <property type="evidence" value="ECO:0007669"/>
    <property type="project" value="UniProtKB-UniRule"/>
</dbReference>
<dbReference type="CDD" id="cd13836">
    <property type="entry name" value="IHF_B"/>
    <property type="match status" value="1"/>
</dbReference>
<dbReference type="Gene3D" id="4.10.520.10">
    <property type="entry name" value="IHF-like DNA-binding proteins"/>
    <property type="match status" value="1"/>
</dbReference>
<dbReference type="HAMAP" id="MF_00381">
    <property type="entry name" value="IHF_beta"/>
    <property type="match status" value="1"/>
</dbReference>
<dbReference type="InterPro" id="IPR000119">
    <property type="entry name" value="Hist_DNA-bd"/>
</dbReference>
<dbReference type="InterPro" id="IPR020816">
    <property type="entry name" value="Histone-like_DNA-bd_CS"/>
</dbReference>
<dbReference type="InterPro" id="IPR010992">
    <property type="entry name" value="IHF-like_DNA-bd_dom_sf"/>
</dbReference>
<dbReference type="InterPro" id="IPR005685">
    <property type="entry name" value="IHF_beta"/>
</dbReference>
<dbReference type="NCBIfam" id="TIGR00988">
    <property type="entry name" value="hip"/>
    <property type="match status" value="1"/>
</dbReference>
<dbReference type="NCBIfam" id="NF001222">
    <property type="entry name" value="PRK00199.1"/>
    <property type="match status" value="1"/>
</dbReference>
<dbReference type="PANTHER" id="PTHR33175">
    <property type="entry name" value="DNA-BINDING PROTEIN HU"/>
    <property type="match status" value="1"/>
</dbReference>
<dbReference type="PANTHER" id="PTHR33175:SF5">
    <property type="entry name" value="INTEGRATION HOST FACTOR SUBUNIT BETA"/>
    <property type="match status" value="1"/>
</dbReference>
<dbReference type="Pfam" id="PF00216">
    <property type="entry name" value="Bac_DNA_binding"/>
    <property type="match status" value="1"/>
</dbReference>
<dbReference type="PRINTS" id="PR01727">
    <property type="entry name" value="DNABINDINGHU"/>
</dbReference>
<dbReference type="SMART" id="SM00411">
    <property type="entry name" value="BHL"/>
    <property type="match status" value="1"/>
</dbReference>
<dbReference type="SUPFAM" id="SSF47729">
    <property type="entry name" value="IHF-like DNA-binding proteins"/>
    <property type="match status" value="1"/>
</dbReference>
<dbReference type="PROSITE" id="PS00045">
    <property type="entry name" value="HISTONE_LIKE"/>
    <property type="match status" value="1"/>
</dbReference>
<reference key="1">
    <citation type="submission" date="2006-08" db="EMBL/GenBank/DDBJ databases">
        <title>Complete sequence of Maricaulis maris MCS10.</title>
        <authorList>
            <consortium name="US DOE Joint Genome Institute"/>
            <person name="Copeland A."/>
            <person name="Lucas S."/>
            <person name="Lapidus A."/>
            <person name="Barry K."/>
            <person name="Detter J.C."/>
            <person name="Glavina del Rio T."/>
            <person name="Hammon N."/>
            <person name="Israni S."/>
            <person name="Dalin E."/>
            <person name="Tice H."/>
            <person name="Pitluck S."/>
            <person name="Saunders E."/>
            <person name="Brettin T."/>
            <person name="Bruce D."/>
            <person name="Han C."/>
            <person name="Tapia R."/>
            <person name="Gilna P."/>
            <person name="Schmutz J."/>
            <person name="Larimer F."/>
            <person name="Land M."/>
            <person name="Hauser L."/>
            <person name="Kyrpides N."/>
            <person name="Mikhailova N."/>
            <person name="Viollier P."/>
            <person name="Stephens C."/>
            <person name="Richardson P."/>
        </authorList>
    </citation>
    <scope>NUCLEOTIDE SEQUENCE [LARGE SCALE GENOMIC DNA]</scope>
    <source>
        <strain>MCS10</strain>
    </source>
</reference>
<comment type="function">
    <text evidence="1">This protein is one of the two subunits of integration host factor, a specific DNA-binding protein that functions in genetic recombination as well as in transcriptional and translational control.</text>
</comment>
<comment type="subunit">
    <text evidence="1">Heterodimer of an alpha and a beta chain.</text>
</comment>
<comment type="similarity">
    <text evidence="1">Belongs to the bacterial histone-like protein family.</text>
</comment>
<protein>
    <recommendedName>
        <fullName evidence="1">Integration host factor subunit beta</fullName>
        <shortName evidence="1">IHF-beta</shortName>
    </recommendedName>
</protein>
<sequence>MIKSELIDQLAEANPHLYHRDVERVVNTILDGITDALARGERVELRGFGAFSVRHRPARVGRNPRTGESVAVKEKHVPFFKTGKELRERVDASRESNPEIA</sequence>
<organism>
    <name type="scientific">Maricaulis maris (strain MCS10)</name>
    <name type="common">Caulobacter maris</name>
    <dbReference type="NCBI Taxonomy" id="394221"/>
    <lineage>
        <taxon>Bacteria</taxon>
        <taxon>Pseudomonadati</taxon>
        <taxon>Pseudomonadota</taxon>
        <taxon>Alphaproteobacteria</taxon>
        <taxon>Maricaulales</taxon>
        <taxon>Maricaulaceae</taxon>
        <taxon>Maricaulis</taxon>
    </lineage>
</organism>
<evidence type="ECO:0000255" key="1">
    <source>
        <dbReference type="HAMAP-Rule" id="MF_00381"/>
    </source>
</evidence>
<gene>
    <name evidence="1" type="primary">ihfB</name>
    <name evidence="1" type="synonym">himD</name>
    <name type="ordered locus">Mmar10_0097</name>
</gene>
<accession>Q0ATJ4</accession>